<organism>
    <name type="scientific">Homo sapiens</name>
    <name type="common">Human</name>
    <dbReference type="NCBI Taxonomy" id="9606"/>
    <lineage>
        <taxon>Eukaryota</taxon>
        <taxon>Metazoa</taxon>
        <taxon>Chordata</taxon>
        <taxon>Craniata</taxon>
        <taxon>Vertebrata</taxon>
        <taxon>Euteleostomi</taxon>
        <taxon>Mammalia</taxon>
        <taxon>Eutheria</taxon>
        <taxon>Euarchontoglires</taxon>
        <taxon>Primates</taxon>
        <taxon>Haplorrhini</taxon>
        <taxon>Catarrhini</taxon>
        <taxon>Hominidae</taxon>
        <taxon>Homo</taxon>
    </lineage>
</organism>
<name>KV229_HUMAN</name>
<evidence type="ECO:0000250" key="1">
    <source>
        <dbReference type="UniProtKB" id="P01602"/>
    </source>
</evidence>
<evidence type="ECO:0000255" key="2"/>
<evidence type="ECO:0000255" key="3">
    <source>
        <dbReference type="PROSITE-ProRule" id="PRU00114"/>
    </source>
</evidence>
<evidence type="ECO:0000303" key="4">
    <source>
    </source>
</evidence>
<evidence type="ECO:0000303" key="5">
    <source>
    </source>
</evidence>
<evidence type="ECO:0000303" key="6">
    <source>
    </source>
</evidence>
<evidence type="ECO:0000303" key="7">
    <source>
    </source>
</evidence>
<evidence type="ECO:0000303" key="8">
    <source>
    </source>
</evidence>
<evidence type="ECO:0000303" key="9">
    <source ref="4"/>
</evidence>
<evidence type="ECO:0000305" key="10"/>
<feature type="signal peptide" evidence="2">
    <location>
        <begin position="1"/>
        <end position="20"/>
    </location>
</feature>
<feature type="chain" id="PRO_0000439559" description="Immunoglobulin kappa variable 2-29" evidence="2">
    <location>
        <begin position="21"/>
        <end position="120"/>
    </location>
</feature>
<feature type="domain" description="Ig-like" evidence="3">
    <location>
        <begin position="21"/>
        <end position="120"/>
    </location>
</feature>
<feature type="region of interest" description="Framework-1" evidence="1">
    <location>
        <begin position="21"/>
        <end position="43"/>
    </location>
</feature>
<feature type="region of interest" description="Complementarity-determining-1" evidence="1">
    <location>
        <begin position="44"/>
        <end position="59"/>
    </location>
</feature>
<feature type="region of interest" description="Framework-2" evidence="1">
    <location>
        <begin position="60"/>
        <end position="74"/>
    </location>
</feature>
<feature type="region of interest" description="Complementarity-determining-2" evidence="1">
    <location>
        <begin position="75"/>
        <end position="81"/>
    </location>
</feature>
<feature type="region of interest" description="Framework-3" evidence="1">
    <location>
        <begin position="82"/>
        <end position="113"/>
    </location>
</feature>
<feature type="region of interest" description="Complementarity-determining-3" evidence="1">
    <location>
        <begin position="114"/>
        <end position="120" status="greater than"/>
    </location>
</feature>
<feature type="disulfide bond" evidence="3">
    <location>
        <begin position="43"/>
        <end position="113"/>
    </location>
</feature>
<feature type="non-terminal residue">
    <location>
        <position position="120"/>
    </location>
</feature>
<keyword id="KW-1064">Adaptive immunity</keyword>
<keyword id="KW-1003">Cell membrane</keyword>
<keyword id="KW-1015">Disulfide bond</keyword>
<keyword id="KW-0391">Immunity</keyword>
<keyword id="KW-1280">Immunoglobulin</keyword>
<keyword id="KW-0393">Immunoglobulin domain</keyword>
<keyword id="KW-0472">Membrane</keyword>
<keyword id="KW-1267">Proteomics identification</keyword>
<keyword id="KW-1185">Reference proteome</keyword>
<keyword id="KW-0964">Secreted</keyword>
<keyword id="KW-0732">Signal</keyword>
<reference key="1">
    <citation type="journal article" date="1996" name="Immunogenetics">
        <title>New alleles of IGKV genes A2 and A18 suggest significant human IGKV locus polymorphism.</title>
        <authorList>
            <person name="Atkinson M.J."/>
            <person name="Cowan M.J."/>
            <person name="Feeney A.J."/>
        </authorList>
    </citation>
    <scope>NUCLEOTIDE SEQUENCE [GENOMIC DNA] (IMGT IGKV2-29*02)</scope>
</reference>
<reference key="2">
    <citation type="journal article" date="2005" name="Nature">
        <title>Generation and annotation of the DNA sequences of human chromosomes 2 and 4.</title>
        <authorList>
            <person name="Hillier L.W."/>
            <person name="Graves T.A."/>
            <person name="Fulton R.S."/>
            <person name="Fulton L.A."/>
            <person name="Pepin K.H."/>
            <person name="Minx P."/>
            <person name="Wagner-McPherson C."/>
            <person name="Layman D."/>
            <person name="Wylie K."/>
            <person name="Sekhon M."/>
            <person name="Becker M.C."/>
            <person name="Fewell G.A."/>
            <person name="Delehaunty K.D."/>
            <person name="Miner T.L."/>
            <person name="Nash W.E."/>
            <person name="Kremitzki C."/>
            <person name="Oddy L."/>
            <person name="Du H."/>
            <person name="Sun H."/>
            <person name="Bradshaw-Cordum H."/>
            <person name="Ali J."/>
            <person name="Carter J."/>
            <person name="Cordes M."/>
            <person name="Harris A."/>
            <person name="Isak A."/>
            <person name="van Brunt A."/>
            <person name="Nguyen C."/>
            <person name="Du F."/>
            <person name="Courtney L."/>
            <person name="Kalicki J."/>
            <person name="Ozersky P."/>
            <person name="Abbott S."/>
            <person name="Armstrong J."/>
            <person name="Belter E.A."/>
            <person name="Caruso L."/>
            <person name="Cedroni M."/>
            <person name="Cotton M."/>
            <person name="Davidson T."/>
            <person name="Desai A."/>
            <person name="Elliott G."/>
            <person name="Erb T."/>
            <person name="Fronick C."/>
            <person name="Gaige T."/>
            <person name="Haakenson W."/>
            <person name="Haglund K."/>
            <person name="Holmes A."/>
            <person name="Harkins R."/>
            <person name="Kim K."/>
            <person name="Kruchowski S.S."/>
            <person name="Strong C.M."/>
            <person name="Grewal N."/>
            <person name="Goyea E."/>
            <person name="Hou S."/>
            <person name="Levy A."/>
            <person name="Martinka S."/>
            <person name="Mead K."/>
            <person name="McLellan M.D."/>
            <person name="Meyer R."/>
            <person name="Randall-Maher J."/>
            <person name="Tomlinson C."/>
            <person name="Dauphin-Kohlberg S."/>
            <person name="Kozlowicz-Reilly A."/>
            <person name="Shah N."/>
            <person name="Swearengen-Shahid S."/>
            <person name="Snider J."/>
            <person name="Strong J.T."/>
            <person name="Thompson J."/>
            <person name="Yoakum M."/>
            <person name="Leonard S."/>
            <person name="Pearman C."/>
            <person name="Trani L."/>
            <person name="Radionenko M."/>
            <person name="Waligorski J.E."/>
            <person name="Wang C."/>
            <person name="Rock S.M."/>
            <person name="Tin-Wollam A.-M."/>
            <person name="Maupin R."/>
            <person name="Latreille P."/>
            <person name="Wendl M.C."/>
            <person name="Yang S.-P."/>
            <person name="Pohl C."/>
            <person name="Wallis J.W."/>
            <person name="Spieth J."/>
            <person name="Bieri T.A."/>
            <person name="Berkowicz N."/>
            <person name="Nelson J.O."/>
            <person name="Osborne J."/>
            <person name="Ding L."/>
            <person name="Meyer R."/>
            <person name="Sabo A."/>
            <person name="Shotland Y."/>
            <person name="Sinha P."/>
            <person name="Wohldmann P.E."/>
            <person name="Cook L.L."/>
            <person name="Hickenbotham M.T."/>
            <person name="Eldred J."/>
            <person name="Williams D."/>
            <person name="Jones T.A."/>
            <person name="She X."/>
            <person name="Ciccarelli F.D."/>
            <person name="Izaurralde E."/>
            <person name="Taylor J."/>
            <person name="Schmutz J."/>
            <person name="Myers R.M."/>
            <person name="Cox D.R."/>
            <person name="Huang X."/>
            <person name="McPherson J.D."/>
            <person name="Mardis E.R."/>
            <person name="Clifton S.W."/>
            <person name="Warren W.C."/>
            <person name="Chinwalla A.T."/>
            <person name="Eddy S.R."/>
            <person name="Marra M.A."/>
            <person name="Ovcharenko I."/>
            <person name="Furey T.S."/>
            <person name="Miller W."/>
            <person name="Eichler E.E."/>
            <person name="Bork P."/>
            <person name="Suyama M."/>
            <person name="Torrents D."/>
            <person name="Waterston R.H."/>
            <person name="Wilson R.K."/>
        </authorList>
    </citation>
    <scope>NUCLEOTIDE SEQUENCE [LARGE SCALE GENOMIC DNA] (IMGT IGKV2-29*01)</scope>
</reference>
<reference key="3">
    <citation type="journal article" date="2001" name="Exp. Clin. Immunogenet.">
        <title>Nomenclature of the human immunoglobulin kappa (IGK) genes.</title>
        <authorList>
            <person name="Lefranc M.P."/>
        </authorList>
    </citation>
    <scope>NOMEMCLATURE</scope>
</reference>
<reference key="4">
    <citation type="book" date="2001" name="The Immunoglobulin FactsBook.">
        <title>The Immunoglobulin FactsBook.</title>
        <editorList>
            <person name="Lefranc M.P."/>
            <person name="Lefranc G."/>
        </editorList>
        <authorList>
            <person name="Lefranc M.P."/>
            <person name="Lefranc G."/>
        </authorList>
    </citation>
    <scope>NOMENCLATURE</scope>
</reference>
<reference key="5">
    <citation type="journal article" date="2007" name="Annu. Rev. Genet.">
        <title>Immunoglobulin somatic hypermutation.</title>
        <authorList>
            <person name="Teng G."/>
            <person name="Papavasiliou F.N."/>
        </authorList>
    </citation>
    <scope>REVIEW ON SOMATIC HYPERMUTATION</scope>
</reference>
<reference key="6">
    <citation type="journal article" date="2010" name="J. Allergy Clin. Immunol.">
        <title>Structure and function of immunoglobulins.</title>
        <authorList>
            <person name="Schroeder H.W. Jr."/>
            <person name="Cavacini L."/>
        </authorList>
    </citation>
    <scope>REVIEW ON IMMUNOGLOBULINS</scope>
</reference>
<reference key="7">
    <citation type="journal article" date="2012" name="Nat. Rev. Immunol.">
        <title>Molecular programming of B cell memory.</title>
        <authorList>
            <person name="McHeyzer-Williams M."/>
            <person name="Okitsu S."/>
            <person name="Wang N."/>
            <person name="McHeyzer-Williams L."/>
        </authorList>
    </citation>
    <scope>REVIEW ON FUNCTION</scope>
</reference>
<reference key="8">
    <citation type="journal article" date="2014" name="Front. Immunol.">
        <title>Immunoglobulin and T Cell Receptor Genes: IMGT((R)) and the Birth and Rise of Immunoinformatics.</title>
        <authorList>
            <person name="Lefranc M.P."/>
        </authorList>
    </citation>
    <scope>NOMENCLATURE</scope>
</reference>
<proteinExistence type="evidence at protein level"/>
<dbReference type="EMBL" id="U41645">
    <property type="protein sequence ID" value="AAB17518.1"/>
    <property type="status" value="ALT_SEQ"/>
    <property type="molecule type" value="Genomic_DNA"/>
</dbReference>
<dbReference type="EMBL" id="AC244255">
    <property type="status" value="NOT_ANNOTATED_CDS"/>
    <property type="molecule type" value="Genomic_DNA"/>
</dbReference>
<dbReference type="EMDB" id="EMD-36432"/>
<dbReference type="EMDB" id="EMD-36433"/>
<dbReference type="EMDB" id="EMD-36434"/>
<dbReference type="EMDB" id="EMD-36435"/>
<dbReference type="EMDB" id="EMD-36439"/>
<dbReference type="EMDB" id="EMD-36440"/>
<dbReference type="EMDB" id="EMD-36441"/>
<dbReference type="SMR" id="A2NJV5"/>
<dbReference type="FunCoup" id="A2NJV5">
    <property type="interactions" value="416"/>
</dbReference>
<dbReference type="IntAct" id="A2NJV5">
    <property type="interactions" value="2"/>
</dbReference>
<dbReference type="IMGT_GENE-DB" id="IGKV2-29"/>
<dbReference type="GlyGen" id="A2NJV5">
    <property type="glycosylation" value="1 site"/>
</dbReference>
<dbReference type="BioMuta" id="HGNC:5784"/>
<dbReference type="jPOST" id="A2NJV5"/>
<dbReference type="MassIVE" id="A2NJV5"/>
<dbReference type="AGR" id="HGNC:5784"/>
<dbReference type="GeneCards" id="IGKV2-29"/>
<dbReference type="HGNC" id="HGNC:5784">
    <property type="gene designation" value="IGKV2-29"/>
</dbReference>
<dbReference type="neXtProt" id="NX_A2NJV5"/>
<dbReference type="InParanoid" id="A2NJV5"/>
<dbReference type="PAN-GO" id="A2NJV5">
    <property type="GO annotations" value="3 GO annotations based on evolutionary models"/>
</dbReference>
<dbReference type="PathwayCommons" id="A2NJV5"/>
<dbReference type="Reactome" id="R-HSA-166663">
    <property type="pathway name" value="Initial triggering of complement"/>
</dbReference>
<dbReference type="Reactome" id="R-HSA-173623">
    <property type="pathway name" value="Classical antibody-mediated complement activation"/>
</dbReference>
<dbReference type="Reactome" id="R-HSA-198933">
    <property type="pathway name" value="Immunoregulatory interactions between a Lymphoid and a non-Lymphoid cell"/>
</dbReference>
<dbReference type="Reactome" id="R-HSA-202733">
    <property type="pathway name" value="Cell surface interactions at the vascular wall"/>
</dbReference>
<dbReference type="Reactome" id="R-HSA-2029481">
    <property type="pathway name" value="FCGR activation"/>
</dbReference>
<dbReference type="Reactome" id="R-HSA-2029482">
    <property type="pathway name" value="Regulation of actin dynamics for phagocytic cup formation"/>
</dbReference>
<dbReference type="Reactome" id="R-HSA-2029485">
    <property type="pathway name" value="Role of phospholipids in phagocytosis"/>
</dbReference>
<dbReference type="Reactome" id="R-HSA-2168880">
    <property type="pathway name" value="Scavenging of heme from plasma"/>
</dbReference>
<dbReference type="Reactome" id="R-HSA-2454202">
    <property type="pathway name" value="Fc epsilon receptor (FCERI) signaling"/>
</dbReference>
<dbReference type="Reactome" id="R-HSA-2730905">
    <property type="pathway name" value="Role of LAT2/NTAL/LAB on calcium mobilization"/>
</dbReference>
<dbReference type="Reactome" id="R-HSA-2871796">
    <property type="pathway name" value="FCERI mediated MAPK activation"/>
</dbReference>
<dbReference type="Reactome" id="R-HSA-2871809">
    <property type="pathway name" value="FCERI mediated Ca+2 mobilization"/>
</dbReference>
<dbReference type="Reactome" id="R-HSA-2871837">
    <property type="pathway name" value="FCERI mediated NF-kB activation"/>
</dbReference>
<dbReference type="Reactome" id="R-HSA-5690714">
    <property type="pathway name" value="CD22 mediated BCR regulation"/>
</dbReference>
<dbReference type="Reactome" id="R-HSA-9664323">
    <property type="pathway name" value="FCGR3A-mediated IL10 synthesis"/>
</dbReference>
<dbReference type="Reactome" id="R-HSA-9664422">
    <property type="pathway name" value="FCGR3A-mediated phagocytosis"/>
</dbReference>
<dbReference type="Reactome" id="R-HSA-9679191">
    <property type="pathway name" value="Potential therapeutics for SARS"/>
</dbReference>
<dbReference type="Reactome" id="R-HSA-977606">
    <property type="pathway name" value="Regulation of Complement cascade"/>
</dbReference>
<dbReference type="Reactome" id="R-HSA-983695">
    <property type="pathway name" value="Antigen activates B Cell Receptor (BCR) leading to generation of second messengers"/>
</dbReference>
<dbReference type="SignaLink" id="A2NJV5"/>
<dbReference type="ChiTaRS" id="IGKV2-29">
    <property type="organism name" value="human"/>
</dbReference>
<dbReference type="Pharos" id="A2NJV5">
    <property type="development level" value="Tdark"/>
</dbReference>
<dbReference type="PRO" id="PR:A2NJV5"/>
<dbReference type="Proteomes" id="UP000005640">
    <property type="component" value="Unplaced"/>
</dbReference>
<dbReference type="RNAct" id="A2NJV5">
    <property type="molecule type" value="protein"/>
</dbReference>
<dbReference type="GO" id="GO:0005576">
    <property type="term" value="C:extracellular region"/>
    <property type="evidence" value="ECO:0000304"/>
    <property type="project" value="Reactome"/>
</dbReference>
<dbReference type="GO" id="GO:0019814">
    <property type="term" value="C:immunoglobulin complex"/>
    <property type="evidence" value="ECO:0000318"/>
    <property type="project" value="GO_Central"/>
</dbReference>
<dbReference type="GO" id="GO:0005886">
    <property type="term" value="C:plasma membrane"/>
    <property type="evidence" value="ECO:0000304"/>
    <property type="project" value="Reactome"/>
</dbReference>
<dbReference type="GO" id="GO:0002250">
    <property type="term" value="P:adaptive immune response"/>
    <property type="evidence" value="ECO:0007669"/>
    <property type="project" value="UniProtKB-KW"/>
</dbReference>
<dbReference type="GO" id="GO:0006955">
    <property type="term" value="P:immune response"/>
    <property type="evidence" value="ECO:0000318"/>
    <property type="project" value="GO_Central"/>
</dbReference>
<dbReference type="FunFam" id="2.60.40.10:FF:000365">
    <property type="entry name" value="If kappa light chain"/>
    <property type="match status" value="1"/>
</dbReference>
<dbReference type="Gene3D" id="2.60.40.10">
    <property type="entry name" value="Immunoglobulins"/>
    <property type="match status" value="1"/>
</dbReference>
<dbReference type="InterPro" id="IPR007110">
    <property type="entry name" value="Ig-like_dom"/>
</dbReference>
<dbReference type="InterPro" id="IPR036179">
    <property type="entry name" value="Ig-like_dom_sf"/>
</dbReference>
<dbReference type="InterPro" id="IPR013783">
    <property type="entry name" value="Ig-like_fold"/>
</dbReference>
<dbReference type="InterPro" id="IPR013106">
    <property type="entry name" value="Ig_V-set"/>
</dbReference>
<dbReference type="InterPro" id="IPR050150">
    <property type="entry name" value="IgV_Light_Chain"/>
</dbReference>
<dbReference type="PANTHER" id="PTHR23267">
    <property type="entry name" value="IMMUNOGLOBULIN LIGHT CHAIN"/>
    <property type="match status" value="1"/>
</dbReference>
<dbReference type="Pfam" id="PF07686">
    <property type="entry name" value="V-set"/>
    <property type="match status" value="1"/>
</dbReference>
<dbReference type="SMART" id="SM00406">
    <property type="entry name" value="IGv"/>
    <property type="match status" value="1"/>
</dbReference>
<dbReference type="SUPFAM" id="SSF48726">
    <property type="entry name" value="Immunoglobulin"/>
    <property type="match status" value="1"/>
</dbReference>
<dbReference type="PROSITE" id="PS50835">
    <property type="entry name" value="IG_LIKE"/>
    <property type="match status" value="1"/>
</dbReference>
<protein>
    <recommendedName>
        <fullName evidence="4 9">Immunoglobulin kappa variable 2-29</fullName>
    </recommendedName>
</protein>
<gene>
    <name evidence="4 9" type="primary">IGKV2-29</name>
</gene>
<accession>A2NJV5</accession>
<comment type="function">
    <text evidence="5 6 7 8">V region of the variable domain of immunoglobulin light chains that participates in the antigen recognition (PubMed:24600447). Immunoglobulins, also known as antibodies, are membrane-bound or secreted glycoproteins produced by B lymphocytes. In the recognition phase of humoral immunity, the membrane-bound immunoglobulins serve as receptors which, upon binding of a specific antigen, trigger the clonal expansion and differentiation of B lymphocytes into immunoglobulins-secreting plasma cells. Secreted immunoglobulins mediate the effector phase of humoral immunity, which results in the elimination of bound antigens (PubMed:20176268, PubMed:22158414). The antigen binding site is formed by the variable domain of one heavy chain, together with that of its associated light chain. Thus, each immunoglobulin has two antigen binding sites with remarkable affinity for a particular antigen. The variable domains are assembled by a process called V-(D)-J rearrangement and can then be subjected to somatic hypermutations which, after exposure to antigen and selection, allow affinity maturation for a particular antigen (PubMed:17576170, PubMed:20176268).</text>
</comment>
<comment type="subunit">
    <text evidence="6">Immunoglobulins are composed of two identical heavy chains and two identical light chains; disulfide-linked.</text>
</comment>
<comment type="subcellular location">
    <subcellularLocation>
        <location evidence="6 7">Secreted</location>
    </subcellularLocation>
    <subcellularLocation>
        <location evidence="6 7">Cell membrane</location>
    </subcellularLocation>
</comment>
<comment type="polymorphism">
    <text evidence="10">There are several alleles. The sequence shown is that of the functional IMGT allele IGKV2-29*02 that is not represented on the reference genome assembly (GRCh38/hg38). The sequence of the reference genome assembly (GRCh38/hg38) is that of IMGT allele IGKV2-29*01 that is a pseudogene due to a stop codon polymorphism at position 113.</text>
</comment>
<comment type="caution">
    <text evidence="10">For an example of a full-length immunoglobulin kappa light chain see AC P0DOX7.</text>
</comment>
<comment type="sequence caution" evidence="10">
    <conflict type="erroneous gene model prediction">
        <sequence resource="EMBL-CDS" id="AAB17518"/>
    </conflict>
</comment>
<sequence>MRLPAQLLGLLMLWIPGSSADIVMTQTPLSLSVTPGQPASISCKSSQSLLHSDGKTYLYWYLQKPGQSPQLLIYEVSSRFSGVPDRFSGSGSGTDFTLKISRVEAEDVGVYYCMQGIHLP</sequence>